<keyword id="KW-0106">Calcium</keyword>
<keyword id="KW-0167">Capsid protein</keyword>
<keyword id="KW-1154">Intermediate capsid protein</keyword>
<keyword id="KW-0479">Metal-binding</keyword>
<keyword id="KW-0832">Ubl conjugation</keyword>
<keyword id="KW-0946">Virion</keyword>
<keyword id="KW-0862">Zinc</keyword>
<reference key="1">
    <citation type="journal article" date="2008" name="J. Virol.">
        <title>Full genome-based classification of rotaviruses reveals a common origin between human Wa-Like and porcine rotavirus strains and human DS-1-like and bovine rotavirus strains.</title>
        <authorList>
            <person name="Matthijnssens J."/>
            <person name="Ciarlet M."/>
            <person name="Heiman E.M."/>
            <person name="Arijs I."/>
            <person name="Delbeke T."/>
            <person name="McDonald S.M."/>
            <person name="Palombo E.A."/>
            <person name="Iturriza-Gomara M."/>
            <person name="Maes P."/>
            <person name="Patton J.T."/>
            <person name="Rahman M."/>
            <person name="Van Ranst M."/>
        </authorList>
    </citation>
    <scope>NUCLEOTIDE SEQUENCE [GENOMIC RNA]</scope>
</reference>
<organism>
    <name type="scientific">Rotavirus A (strain RVA/Human/Japan/YO/1977/G3P1A[8])</name>
    <name type="common">RV-A</name>
    <dbReference type="NCBI Taxonomy" id="578832"/>
    <lineage>
        <taxon>Viruses</taxon>
        <taxon>Riboviria</taxon>
        <taxon>Orthornavirae</taxon>
        <taxon>Duplornaviricota</taxon>
        <taxon>Resentoviricetes</taxon>
        <taxon>Reovirales</taxon>
        <taxon>Sedoreoviridae</taxon>
        <taxon>Rotavirus</taxon>
        <taxon>Rotavirus A</taxon>
    </lineage>
</organism>
<name>VP6_ROTYO</name>
<feature type="chain" id="PRO_0000368177" description="Intermediate capsid protein VP6">
    <location>
        <begin position="1"/>
        <end position="397"/>
    </location>
</feature>
<feature type="region of interest" description="Interaction with the inner capsid protein VP2" evidence="1">
    <location>
        <begin position="62"/>
        <end position="73"/>
    </location>
</feature>
<feature type="binding site" evidence="1">
    <location>
        <position position="153"/>
    </location>
    <ligand>
        <name>Zn(2+)</name>
        <dbReference type="ChEBI" id="CHEBI:29105"/>
        <note>ligand shared between all trimeric partners</note>
    </ligand>
</feature>
<feature type="binding site" evidence="1">
    <location>
        <position position="266"/>
    </location>
    <ligand>
        <name>Ca(2+)</name>
        <dbReference type="ChEBI" id="CHEBI:29108"/>
    </ligand>
</feature>
<feature type="binding site" evidence="1">
    <location>
        <position position="286"/>
    </location>
    <ligand>
        <name>Ca(2+)</name>
        <dbReference type="ChEBI" id="CHEBI:29108"/>
    </ligand>
</feature>
<protein>
    <recommendedName>
        <fullName evidence="1">Intermediate capsid protein VP6</fullName>
    </recommendedName>
</protein>
<evidence type="ECO:0000255" key="1">
    <source>
        <dbReference type="HAMAP-Rule" id="MF_04129"/>
    </source>
</evidence>
<dbReference type="EMBL" id="DQ870500">
    <property type="protein sequence ID" value="ABI60855.1"/>
    <property type="molecule type" value="Genomic_RNA"/>
</dbReference>
<dbReference type="SMR" id="A7J3A5"/>
<dbReference type="GO" id="GO:0019031">
    <property type="term" value="C:viral envelope"/>
    <property type="evidence" value="ECO:0007669"/>
    <property type="project" value="UniProtKB-UniRule"/>
</dbReference>
<dbReference type="GO" id="GO:0039626">
    <property type="term" value="C:viral intermediate capsid"/>
    <property type="evidence" value="ECO:0007669"/>
    <property type="project" value="UniProtKB-UniRule"/>
</dbReference>
<dbReference type="GO" id="GO:0046789">
    <property type="term" value="F:host cell surface receptor binding"/>
    <property type="evidence" value="ECO:0007669"/>
    <property type="project" value="UniProtKB-UniRule"/>
</dbReference>
<dbReference type="GO" id="GO:0046872">
    <property type="term" value="F:metal ion binding"/>
    <property type="evidence" value="ECO:0007669"/>
    <property type="project" value="UniProtKB-UniRule"/>
</dbReference>
<dbReference type="GO" id="GO:0005198">
    <property type="term" value="F:structural molecule activity"/>
    <property type="evidence" value="ECO:0007669"/>
    <property type="project" value="UniProtKB-UniRule"/>
</dbReference>
<dbReference type="GO" id="GO:0019064">
    <property type="term" value="P:fusion of virus membrane with host plasma membrane"/>
    <property type="evidence" value="ECO:0007669"/>
    <property type="project" value="UniProtKB-UniRule"/>
</dbReference>
<dbReference type="FunFam" id="2.60.120.170:FF:000001">
    <property type="entry name" value="Intermediate capsid protein VP6"/>
    <property type="match status" value="1"/>
</dbReference>
<dbReference type="Gene3D" id="2.60.120.170">
    <property type="match status" value="1"/>
</dbReference>
<dbReference type="Gene3D" id="1.10.1350.10">
    <property type="entry name" value="Viral capsid alpha domain"/>
    <property type="match status" value="1"/>
</dbReference>
<dbReference type="HAMAP" id="MF_04126">
    <property type="entry name" value="Rota_VP6"/>
    <property type="match status" value="1"/>
</dbReference>
<dbReference type="HAMAP" id="MF_04129">
    <property type="entry name" value="Rota_VP6_A"/>
    <property type="match status" value="1"/>
</dbReference>
<dbReference type="InterPro" id="IPR008980">
    <property type="entry name" value="Capsid_hemagglutn"/>
</dbReference>
<dbReference type="InterPro" id="IPR001385">
    <property type="entry name" value="Rotavirus_A/C_VP6"/>
</dbReference>
<dbReference type="InterPro" id="IPR008935">
    <property type="entry name" value="Virus_capsid_a-hlx_vir"/>
</dbReference>
<dbReference type="Pfam" id="PF00980">
    <property type="entry name" value="Rota_Capsid_VP6"/>
    <property type="match status" value="1"/>
</dbReference>
<dbReference type="SUPFAM" id="SSF48345">
    <property type="entry name" value="A virus capsid protein alpha-helical domain"/>
    <property type="match status" value="1"/>
</dbReference>
<dbReference type="SUPFAM" id="SSF49818">
    <property type="entry name" value="Viral protein domain"/>
    <property type="match status" value="1"/>
</dbReference>
<proteinExistence type="inferred from homology"/>
<accession>A7J3A5</accession>
<sequence length="397" mass="44927">MEVLYSLSKTLKDARDKIVEGTLYSNVSDLIQQFNQMIVTMNGNDFQTGGIGNLPVRNWTFDFGLLGTTLLNLDANYVENARTTIEYFIDFIDNVCMDEIARESQRNGVAPQSEALRKLSGIKFKRINFDNSSEYIENWNLQNRRQRTGFVFHKPNIFPYSASFTLNRSQPMHDNLMGTMWLNAGSEIQVAGFDYSCAINAPANIQQFEHIVQLRRALTTATITLLPDAERFSFPRVINSADGATTWFFNPVILRPNNVEVEFLLNGQIINTYQARFGTIIARNFDTIRLSFQLMRPPNMTPAVNALFPQAQPFQHHATVGLTLRIESAVCESVLADANETLLANVTAVRQEYAIPVGPVFPPGMNWTELITNYSPSREDNLQRVFTVASIRSMLIK</sequence>
<comment type="function">
    <text evidence="1">Intermediate capsid protein that self assembles to form an icosahedral capsid with a T=13 symmetry, which consists of 230 trimers of VP6, with channels at each of its five-fold vertices. This capsid constitutes the middle concentric layer of the viral mature particle. The innermost VP2 capsid and the intermediate VP6 capsid remain intact following cell entry to protect the dsRNA from degradation and to prevent unfavorable antiviral responses in the host cell during all the replication cycle of the virus. Nascent transcripts are transcribed within the structural confines of this double-layered particle (DLP) and are extruded through the channels at the five-fold axes. VP6 is required for the transcription activity of the DLP.</text>
</comment>
<comment type="subunit">
    <text evidence="1">Homotrimer. Interacts with the inner capsid protein VP2. Interacts with the outer capsid glycoprotein VP7. Interacts with the outer capsid protein VP5*.</text>
</comment>
<comment type="subcellular location">
    <subcellularLocation>
        <location evidence="1">Virion</location>
    </subcellularLocation>
    <text evidence="1">Component of the intermediate capsid. Also found in spherical cytoplasmic structures, called virus factories, that appear early after infection and are the site of viral replication and packaging.</text>
</comment>
<comment type="PTM">
    <text evidence="1">The N-terminus is blocked.</text>
</comment>
<comment type="PTM">
    <text evidence="1">Sumoylated with SUMO1 and SUMO2. Sumoylation of viral proteins seems to have a positive role on viral replication.</text>
</comment>
<comment type="miscellaneous">
    <text evidence="1">The VP6 trimer contains a zinc ion located at the center of the molecule. The zinc ion is not essential for either trimerization or transcription activity of the DLP. Zinc-depleted VP6 has an increased sensitivity to proteases.</text>
</comment>
<comment type="similarity">
    <text evidence="1">Belongs to the rotavirus VP6 family.</text>
</comment>
<organismHost>
    <name type="scientific">Homo sapiens</name>
    <name type="common">Human</name>
    <dbReference type="NCBI Taxonomy" id="9606"/>
</organismHost>